<sequence length="377" mass="42016">MCDDEETTALVCDNGSGLVKAGFAGDDAPRAVFPSIVGRPRHQGVMVGMGQKDSYVGDEAQSKRGILTLKYPIEHGIITNWDDMEKIWHHTFYNELRVAPEEHPTLLTEAPLNPKANREKMTQIMFETFNVPAMYVAIQAVLSLYASGRTTGIVLDSGDGVTHNVPIYEGYALPHAIQRLDLAGRDLTDYLMKILTERGYSFVTTAEREIVRDIKEKLCYVALDFENEMATAASSSSLEKSYELPDGQVITIGNERFRCPETLFQPSFIGMESAGIHETTYNSIMKCDIDIRKDLYANNVLSGGTTMYPGIADRMQKEITALAPSTMKIKIIAPPERKYSVWIGGSILASLSTFQQMWISKQEYDEAGPSIVHRKCF</sequence>
<organism>
    <name type="scientific">Xenopus laevis</name>
    <name type="common">African clawed frog</name>
    <dbReference type="NCBI Taxonomy" id="8355"/>
    <lineage>
        <taxon>Eukaryota</taxon>
        <taxon>Metazoa</taxon>
        <taxon>Chordata</taxon>
        <taxon>Craniata</taxon>
        <taxon>Vertebrata</taxon>
        <taxon>Euteleostomi</taxon>
        <taxon>Amphibia</taxon>
        <taxon>Batrachia</taxon>
        <taxon>Anura</taxon>
        <taxon>Pipoidea</taxon>
        <taxon>Pipidae</taxon>
        <taxon>Xenopodinae</taxon>
        <taxon>Xenopus</taxon>
        <taxon>Xenopus</taxon>
    </lineage>
</organism>
<accession>P04751</accession>
<accession>Q6AZU8</accession>
<evidence type="ECO:0000250" key="1">
    <source>
        <dbReference type="UniProtKB" id="P62737"/>
    </source>
</evidence>
<evidence type="ECO:0000250" key="2">
    <source>
        <dbReference type="UniProtKB" id="P62739"/>
    </source>
</evidence>
<evidence type="ECO:0000250" key="3">
    <source>
        <dbReference type="UniProtKB" id="P68032"/>
    </source>
</evidence>
<evidence type="ECO:0000250" key="4">
    <source>
        <dbReference type="UniProtKB" id="P68033"/>
    </source>
</evidence>
<evidence type="ECO:0000250" key="5">
    <source>
        <dbReference type="UniProtKB" id="P68135"/>
    </source>
</evidence>
<evidence type="ECO:0000250" key="6">
    <source>
        <dbReference type="UniProtKB" id="P68137"/>
    </source>
</evidence>
<evidence type="ECO:0000269" key="7">
    <source>
    </source>
</evidence>
<evidence type="ECO:0000269" key="8">
    <source>
    </source>
</evidence>
<evidence type="ECO:0000305" key="9"/>
<name>ACTC_XENLA</name>
<proteinExistence type="evidence at transcript level"/>
<keyword id="KW-0007">Acetylation</keyword>
<keyword id="KW-0067">ATP-binding</keyword>
<keyword id="KW-0963">Cytoplasm</keyword>
<keyword id="KW-0206">Cytoskeleton</keyword>
<keyword id="KW-0378">Hydrolase</keyword>
<keyword id="KW-0488">Methylation</keyword>
<keyword id="KW-0514">Muscle protein</keyword>
<keyword id="KW-0547">Nucleotide-binding</keyword>
<keyword id="KW-0558">Oxidation</keyword>
<keyword id="KW-1185">Reference proteome</keyword>
<reference key="1">
    <citation type="journal article" date="1986" name="EMBO J.">
        <title>Upstream sequences required for tissue-specific activation of the cardiac actin gene in Xenopus laevis embryos.</title>
        <authorList>
            <person name="Mohun T.J."/>
            <person name="Garrett N."/>
            <person name="Gurdon J.B."/>
        </authorList>
    </citation>
    <scope>NUCLEOTIDE SEQUENCE [GENOMIC DNA]</scope>
</reference>
<reference key="2">
    <citation type="journal article" date="1986" name="J. Mol. Biol.">
        <title>Isolation and characterization of sarcomeric actin genes expressed in Xenopus laevis embryos.</title>
        <authorList>
            <person name="Stutz F."/>
            <person name="Spohr G."/>
        </authorList>
    </citation>
    <scope>NUCLEOTIDE SEQUENCE [MRNA]</scope>
    <scope>NUCLEOTIDE SEQUENCE [GENOMIC DNA] OF 1-43</scope>
</reference>
<reference key="3">
    <citation type="submission" date="2005-07" db="EMBL/GenBank/DDBJ databases">
        <authorList>
            <consortium name="NIH - Xenopus Gene Collection (XGC) project"/>
        </authorList>
    </citation>
    <scope>NUCLEOTIDE SEQUENCE [LARGE SCALE MRNA]</scope>
    <source>
        <tissue>Embryo</tissue>
        <tissue>Heart</tissue>
    </source>
</reference>
<reference key="4">
    <citation type="journal article" date="1984" name="Nature">
        <title>Cell type-specific activation of actin genes in the early amphibian embryo.</title>
        <authorList>
            <person name="Mohun T.J."/>
            <person name="Brennan S."/>
            <person name="Dathan N."/>
            <person name="Fairman S."/>
            <person name="Gurdon J.B."/>
        </authorList>
    </citation>
    <scope>TISSUE SPECIFICITY</scope>
    <scope>DEVELOPMENTAL STAGE</scope>
</reference>
<reference key="5">
    <citation type="journal article" date="1988" name="J. Mol. Biol.">
        <title>A third striated muscle actin gene is expressed during early development in the amphibian Xenopus laevis.</title>
        <authorList>
            <person name="Mohun T.J."/>
            <person name="Garrett N."/>
            <person name="Stutz F."/>
            <person name="Spohr G."/>
        </authorList>
    </citation>
    <scope>TISSUE SPECIFICITY</scope>
</reference>
<protein>
    <recommendedName>
        <fullName>Actin, alpha cardiac muscle 1</fullName>
        <ecNumber evidence="6">3.6.4.-</ecNumber>
    </recommendedName>
    <alternativeName>
        <fullName>Actin alpha 1</fullName>
    </alternativeName>
    <alternativeName>
        <fullName>Alpha-cardiac actin</fullName>
    </alternativeName>
    <component>
        <recommendedName>
            <fullName>Actin, alpha cardiac muscle 1, intermediate form</fullName>
        </recommendedName>
    </component>
</protein>
<dbReference type="EC" id="3.6.4.-" evidence="6"/>
<dbReference type="EMBL" id="X04669">
    <property type="protein sequence ID" value="CAA28375.1"/>
    <property type="molecule type" value="Genomic_DNA"/>
</dbReference>
<dbReference type="EMBL" id="X03469">
    <property type="protein sequence ID" value="CAA27186.1"/>
    <property type="molecule type" value="mRNA"/>
</dbReference>
<dbReference type="EMBL" id="BC041197">
    <property type="protein sequence ID" value="AAH41197.1"/>
    <property type="molecule type" value="mRNA"/>
</dbReference>
<dbReference type="EMBL" id="BC077221">
    <property type="protein sequence ID" value="AAH77221.1"/>
    <property type="molecule type" value="mRNA"/>
</dbReference>
<dbReference type="EMBL" id="BC099316">
    <property type="protein sequence ID" value="AAH99316.1"/>
    <property type="molecule type" value="mRNA"/>
</dbReference>
<dbReference type="PIR" id="A25705">
    <property type="entry name" value="A24848"/>
</dbReference>
<dbReference type="RefSeq" id="NP_001080060.1">
    <property type="nucleotide sequence ID" value="NM_001086591.2"/>
</dbReference>
<dbReference type="RefSeq" id="XP_018084109.1">
    <property type="nucleotide sequence ID" value="XM_018228620.1"/>
</dbReference>
<dbReference type="SMR" id="P04751"/>
<dbReference type="BioGRID" id="97994">
    <property type="interactions" value="1"/>
</dbReference>
<dbReference type="DNASU" id="379752"/>
<dbReference type="GeneID" id="379752"/>
<dbReference type="KEGG" id="xla:379752"/>
<dbReference type="AGR" id="Xenbase:XB-GENE-865367"/>
<dbReference type="CTD" id="379752"/>
<dbReference type="Xenbase" id="XB-GENE-865367">
    <property type="gene designation" value="actc1.L"/>
</dbReference>
<dbReference type="OMA" id="NETCHVI"/>
<dbReference type="OrthoDB" id="9922428at2759"/>
<dbReference type="CD-CODE" id="78E86D56">
    <property type="entry name" value="Mitochondrial cloud"/>
</dbReference>
<dbReference type="Proteomes" id="UP000186698">
    <property type="component" value="Chromosome 8L"/>
</dbReference>
<dbReference type="Bgee" id="379752">
    <property type="expression patterns" value="Expressed in neurula embryo and 18 other cell types or tissues"/>
</dbReference>
<dbReference type="GO" id="GO:0015629">
    <property type="term" value="C:actin cytoskeleton"/>
    <property type="evidence" value="ECO:0000318"/>
    <property type="project" value="GO_Central"/>
</dbReference>
<dbReference type="GO" id="GO:0005884">
    <property type="term" value="C:actin filament"/>
    <property type="evidence" value="ECO:0000318"/>
    <property type="project" value="GO_Central"/>
</dbReference>
<dbReference type="GO" id="GO:0044297">
    <property type="term" value="C:cell body"/>
    <property type="evidence" value="ECO:0000250"/>
    <property type="project" value="AgBase"/>
</dbReference>
<dbReference type="GO" id="GO:0005737">
    <property type="term" value="C:cytoplasm"/>
    <property type="evidence" value="ECO:0000250"/>
    <property type="project" value="AgBase"/>
</dbReference>
<dbReference type="GO" id="GO:0030175">
    <property type="term" value="C:filopodium"/>
    <property type="evidence" value="ECO:0000250"/>
    <property type="project" value="AgBase"/>
</dbReference>
<dbReference type="GO" id="GO:0030027">
    <property type="term" value="C:lamellipodium"/>
    <property type="evidence" value="ECO:0000250"/>
    <property type="project" value="AgBase"/>
</dbReference>
<dbReference type="GO" id="GO:0030017">
    <property type="term" value="C:sarcomere"/>
    <property type="evidence" value="ECO:0000318"/>
    <property type="project" value="GO_Central"/>
</dbReference>
<dbReference type="GO" id="GO:0005524">
    <property type="term" value="F:ATP binding"/>
    <property type="evidence" value="ECO:0007669"/>
    <property type="project" value="UniProtKB-KW"/>
</dbReference>
<dbReference type="GO" id="GO:0016787">
    <property type="term" value="F:hydrolase activity"/>
    <property type="evidence" value="ECO:0007669"/>
    <property type="project" value="UniProtKB-KW"/>
</dbReference>
<dbReference type="GO" id="GO:0017022">
    <property type="term" value="F:myosin binding"/>
    <property type="evidence" value="ECO:0000318"/>
    <property type="project" value="GO_Central"/>
</dbReference>
<dbReference type="GO" id="GO:0007015">
    <property type="term" value="P:actin filament organization"/>
    <property type="evidence" value="ECO:0000318"/>
    <property type="project" value="GO_Central"/>
</dbReference>
<dbReference type="GO" id="GO:0033275">
    <property type="term" value="P:actin-myosin filament sliding"/>
    <property type="evidence" value="ECO:0000318"/>
    <property type="project" value="GO_Central"/>
</dbReference>
<dbReference type="GO" id="GO:0060047">
    <property type="term" value="P:heart contraction"/>
    <property type="evidence" value="ECO:0000318"/>
    <property type="project" value="GO_Central"/>
</dbReference>
<dbReference type="GO" id="GO:0090131">
    <property type="term" value="P:mesenchyme migration"/>
    <property type="evidence" value="ECO:0000250"/>
    <property type="project" value="AgBase"/>
</dbReference>
<dbReference type="GO" id="GO:0010628">
    <property type="term" value="P:positive regulation of gene expression"/>
    <property type="evidence" value="ECO:0000250"/>
    <property type="project" value="AgBase"/>
</dbReference>
<dbReference type="CDD" id="cd10224">
    <property type="entry name" value="ASKHA_NBD_actin"/>
    <property type="match status" value="1"/>
</dbReference>
<dbReference type="FunFam" id="3.30.420.40:FF:000131">
    <property type="entry name" value="Actin, alpha skeletal muscle"/>
    <property type="match status" value="1"/>
</dbReference>
<dbReference type="FunFam" id="3.30.420.40:FF:000291">
    <property type="entry name" value="Actin, alpha skeletal muscle"/>
    <property type="match status" value="1"/>
</dbReference>
<dbReference type="FunFam" id="3.90.640.10:FF:000047">
    <property type="entry name" value="Actin, alpha skeletal muscle"/>
    <property type="match status" value="1"/>
</dbReference>
<dbReference type="FunFam" id="3.30.420.40:FF:000058">
    <property type="entry name" value="Putative actin-related protein 5"/>
    <property type="match status" value="1"/>
</dbReference>
<dbReference type="Gene3D" id="3.30.420.40">
    <property type="match status" value="2"/>
</dbReference>
<dbReference type="Gene3D" id="3.90.640.10">
    <property type="entry name" value="Actin, Chain A, domain 4"/>
    <property type="match status" value="1"/>
</dbReference>
<dbReference type="InterPro" id="IPR004000">
    <property type="entry name" value="Actin"/>
</dbReference>
<dbReference type="InterPro" id="IPR020902">
    <property type="entry name" value="Actin/actin-like_CS"/>
</dbReference>
<dbReference type="InterPro" id="IPR004001">
    <property type="entry name" value="Actin_CS"/>
</dbReference>
<dbReference type="InterPro" id="IPR043129">
    <property type="entry name" value="ATPase_NBD"/>
</dbReference>
<dbReference type="PANTHER" id="PTHR11937">
    <property type="entry name" value="ACTIN"/>
    <property type="match status" value="1"/>
</dbReference>
<dbReference type="Pfam" id="PF00022">
    <property type="entry name" value="Actin"/>
    <property type="match status" value="1"/>
</dbReference>
<dbReference type="PRINTS" id="PR00190">
    <property type="entry name" value="ACTIN"/>
</dbReference>
<dbReference type="SMART" id="SM00268">
    <property type="entry name" value="ACTIN"/>
    <property type="match status" value="1"/>
</dbReference>
<dbReference type="SUPFAM" id="SSF53067">
    <property type="entry name" value="Actin-like ATPase domain"/>
    <property type="match status" value="2"/>
</dbReference>
<dbReference type="PROSITE" id="PS00406">
    <property type="entry name" value="ACTINS_1"/>
    <property type="match status" value="1"/>
</dbReference>
<dbReference type="PROSITE" id="PS00432">
    <property type="entry name" value="ACTINS_2"/>
    <property type="match status" value="1"/>
</dbReference>
<dbReference type="PROSITE" id="PS01132">
    <property type="entry name" value="ACTINS_ACT_LIKE"/>
    <property type="match status" value="1"/>
</dbReference>
<comment type="function">
    <text>Actins are highly conserved proteins that are involved in various types of cell motility.</text>
</comment>
<comment type="catalytic activity">
    <reaction evidence="6">
        <text>ATP + H2O = ADP + phosphate + H(+)</text>
        <dbReference type="Rhea" id="RHEA:13065"/>
        <dbReference type="ChEBI" id="CHEBI:15377"/>
        <dbReference type="ChEBI" id="CHEBI:15378"/>
        <dbReference type="ChEBI" id="CHEBI:30616"/>
        <dbReference type="ChEBI" id="CHEBI:43474"/>
        <dbReference type="ChEBI" id="CHEBI:456216"/>
    </reaction>
</comment>
<comment type="subunit">
    <text>Polymerization of globular actin (G-actin) leads to a structural filament (F-actin) in the form of a two-stranded helix. Each actin can bind to 4 others.</text>
</comment>
<comment type="subcellular location">
    <subcellularLocation>
        <location>Cytoplasm</location>
        <location>Cytoskeleton</location>
    </subcellularLocation>
</comment>
<comment type="tissue specificity">
    <text evidence="7 8">Shows overlapping but distinct expression patterns with other actins. In tailbud embryos, expressed in embryonic muscle (myotomes). In adults, expressed only in heart muscle.</text>
</comment>
<comment type="developmental stage">
    <text evidence="8">Expressed from the end of gastrulation.</text>
</comment>
<comment type="PTM">
    <molecule>Actin, alpha cardiac muscle 1, intermediate form</molecule>
    <text evidence="4">N-terminal cleavage of acetylated cysteine of intermediate muscle actin by ACTMAP.</text>
</comment>
<comment type="PTM">
    <text evidence="4">Oxidation of Met-46 and Met-49 by MICALs (MICAL1, MICAL2 or MICAL3) to form methionine sulfoxide promotes actin filament depolymerization. MICAL1 and MICAL2 produce the (R)-S-oxide form. The (R)-S-oxide form is reverted by MSRB1 and MSRB2, which promotes actin repolymerization.</text>
</comment>
<comment type="PTM">
    <text evidence="3">Monomethylation at Lys-86 (K86me1) regulates actin-myosin interaction and actomyosin-dependent processes. Demethylation by ALKBH4 is required for maintaining actomyosin dynamics supporting normal cleavage furrow ingression during cytokinesis and cell migration.</text>
</comment>
<comment type="PTM">
    <text evidence="3">Methylated at His-75 by SETD3.</text>
</comment>
<comment type="miscellaneous">
    <text>Xenopus contains at least three sarcomeric alpha actin genes that are preferentially expressed in either heart or skeletal muscle. Due to the tetraploid nature of Xenopus laevis, each of these three alpha actin genes is present in at least two copies.</text>
</comment>
<comment type="miscellaneous">
    <text>The cardiac versus skeletal expression patterns of actins are probably sequence-dependent. For example, cardiac actins contain a Glu at position 3 of the mature peptide, whereas skeletal actins contain an Asp at this position.</text>
</comment>
<comment type="similarity">
    <text evidence="9">Belongs to the actin family.</text>
</comment>
<gene>
    <name type="primary">actc1</name>
    <name type="synonym">acta1</name>
    <name type="synonym">actc</name>
</gene>
<feature type="initiator methionine" description="Removed">
    <location>
        <position position="1"/>
    </location>
</feature>
<feature type="chain" id="PRO_0000443002" description="Actin, alpha cardiac muscle 1, intermediate form" evidence="1">
    <location>
        <begin position="2"/>
        <end position="377"/>
    </location>
</feature>
<feature type="chain" id="PRO_0000000821" description="Actin, alpha cardiac muscle 1" evidence="5">
    <location>
        <begin position="3"/>
        <end position="377"/>
    </location>
</feature>
<feature type="modified residue" description="N-acetylcysteine; in intermediate form" evidence="1">
    <location>
        <position position="2"/>
    </location>
</feature>
<feature type="modified residue" description="N-acetylaspartate; in Actin, alpha cardiac muscle 1" evidence="5">
    <location>
        <position position="3"/>
    </location>
</feature>
<feature type="modified residue" description="Methionine (R)-sulfoxide" evidence="4">
    <location>
        <position position="46"/>
    </location>
</feature>
<feature type="modified residue" description="Methionine (R)-sulfoxide" evidence="4">
    <location>
        <position position="49"/>
    </location>
</feature>
<feature type="modified residue" description="Tele-methylhistidine" evidence="2">
    <location>
        <position position="75"/>
    </location>
</feature>
<feature type="modified residue" description="N6-methyllysine" evidence="3">
    <location>
        <position position="86"/>
    </location>
</feature>